<name>GADH_PICTO</name>
<organism>
    <name type="scientific">Picrophilus torridus (strain ATCC 700027 / DSM 9790 / JCM 10055 / NBRC 100828 / KAW 2/3)</name>
    <dbReference type="NCBI Taxonomy" id="1122961"/>
    <lineage>
        <taxon>Archaea</taxon>
        <taxon>Methanobacteriati</taxon>
        <taxon>Thermoplasmatota</taxon>
        <taxon>Thermoplasmata</taxon>
        <taxon>Thermoplasmatales</taxon>
        <taxon>Picrophilaceae</taxon>
        <taxon>Picrophilus</taxon>
    </lineage>
</organism>
<gene>
    <name evidence="12" type="ordered locus">PTO0332</name>
</gene>
<reference key="1">
    <citation type="journal article" date="2004" name="Proc. Natl. Acad. Sci. U.S.A.">
        <title>Genome sequence of Picrophilus torridus and its implications for life around pH 0.</title>
        <authorList>
            <person name="Fuetterer O."/>
            <person name="Angelov A."/>
            <person name="Liesegang H."/>
            <person name="Gottschalk G."/>
            <person name="Schleper C."/>
            <person name="Schepers B."/>
            <person name="Dock C."/>
            <person name="Antranikian G."/>
            <person name="Liebl W."/>
        </authorList>
    </citation>
    <scope>NUCLEOTIDE SEQUENCE [LARGE SCALE GENOMIC DNA]</scope>
    <source>
        <strain>ATCC 700027 / DSM 9790 / JCM 10055 / NBRC 100828 / KAW 2/3</strain>
    </source>
</reference>
<reference key="2">
    <citation type="journal article" date="2006" name="FEBS Lett.">
        <title>Glyceraldehyde dehydrogenases from the thermoacidophilic euryarchaeota Picrophilus torridus and Thermoplasma acidophilum, key enzymes of the non-phosphorylative Entner-Doudoroff pathway, constitute a novel enzyme family within the aldehyde dehydrogenase superfamily.</title>
        <authorList>
            <person name="Reher M."/>
            <person name="Schoenheit P."/>
        </authorList>
    </citation>
    <scope>FUNCTION</scope>
    <scope>CATALYTIC ACTIVITY</scope>
    <scope>SUBUNIT</scope>
    <scope>IDENTIFICATION BY MASS SPECTROMETRY</scope>
    <scope>BIOPHYSICOCHEMICAL PROPERTIES</scope>
    <scope>ACTIVITY REGULATION</scope>
</reference>
<keyword id="KW-0521">NADP</keyword>
<keyword id="KW-0560">Oxidoreductase</keyword>
<feature type="chain" id="PRO_0000430741" description="D-glyceraldehyde dehydrogenase (NADP(+))">
    <location>
        <begin position="1"/>
        <end position="493"/>
    </location>
</feature>
<feature type="active site" description="Proton acceptor" evidence="7">
    <location>
        <position position="245"/>
    </location>
</feature>
<feature type="active site" description="Proton donor" evidence="3">
    <location>
        <position position="279"/>
    </location>
</feature>
<feature type="binding site" evidence="3">
    <location>
        <begin position="144"/>
        <end position="147"/>
    </location>
    <ligand>
        <name>NADP(+)</name>
        <dbReference type="ChEBI" id="CHEBI:58349"/>
    </ligand>
</feature>
<feature type="binding site" evidence="2">
    <location>
        <position position="147"/>
    </location>
    <ligand>
        <name>substrate</name>
    </ligand>
</feature>
<feature type="binding site" evidence="1">
    <location>
        <position position="155"/>
    </location>
    <ligand>
        <name>NADP(+)</name>
        <dbReference type="ChEBI" id="CHEBI:58349"/>
    </ligand>
</feature>
<feature type="binding site" evidence="1">
    <location>
        <position position="155"/>
    </location>
    <ligand>
        <name>substrate</name>
    </ligand>
</feature>
<feature type="binding site" evidence="4 5">
    <location>
        <begin position="170"/>
        <end position="174"/>
    </location>
    <ligand>
        <name>NADP(+)</name>
        <dbReference type="ChEBI" id="CHEBI:58349"/>
    </ligand>
</feature>
<feature type="binding site" evidence="5">
    <location>
        <begin position="202"/>
        <end position="208"/>
    </location>
    <ligand>
        <name>NADP(+)</name>
        <dbReference type="ChEBI" id="CHEBI:58349"/>
    </ligand>
</feature>
<feature type="binding site" evidence="4">
    <location>
        <begin position="223"/>
        <end position="246"/>
    </location>
    <ligand>
        <name>NADP(+)</name>
        <dbReference type="ChEBI" id="CHEBI:58349"/>
    </ligand>
</feature>
<feature type="binding site" evidence="5">
    <location>
        <position position="279"/>
    </location>
    <ligand>
        <name>NADP(+)</name>
        <dbReference type="ChEBI" id="CHEBI:58349"/>
    </ligand>
</feature>
<feature type="binding site" evidence="1">
    <location>
        <position position="279"/>
    </location>
    <ligand>
        <name>substrate</name>
    </ligand>
</feature>
<feature type="binding site" evidence="3 4">
    <location>
        <begin position="379"/>
        <end position="381"/>
    </location>
    <ligand>
        <name>NADP(+)</name>
        <dbReference type="ChEBI" id="CHEBI:58349"/>
    </ligand>
</feature>
<feature type="site" description="Transition state stabilizer" evidence="1">
    <location>
        <position position="147"/>
    </location>
</feature>
<dbReference type="EC" id="1.2.1.89" evidence="9"/>
<dbReference type="EMBL" id="AE017261">
    <property type="protein sequence ID" value="AAT42917.1"/>
    <property type="molecule type" value="Genomic_DNA"/>
</dbReference>
<dbReference type="RefSeq" id="WP_011177133.1">
    <property type="nucleotide sequence ID" value="NC_005877.1"/>
</dbReference>
<dbReference type="SMR" id="Q6L285"/>
<dbReference type="FunCoup" id="Q6L285">
    <property type="interactions" value="37"/>
</dbReference>
<dbReference type="STRING" id="263820.PTO0332"/>
<dbReference type="PaxDb" id="263820-PTO0332"/>
<dbReference type="GeneID" id="2844486"/>
<dbReference type="KEGG" id="pto:PTO0332"/>
<dbReference type="PATRIC" id="fig|263820.9.peg.354"/>
<dbReference type="eggNOG" id="arCOG01252">
    <property type="taxonomic scope" value="Archaea"/>
</dbReference>
<dbReference type="HOGENOM" id="CLU_005391_5_1_2"/>
<dbReference type="InParanoid" id="Q6L285"/>
<dbReference type="OrthoDB" id="6342at2157"/>
<dbReference type="BRENDA" id="1.2.1.89">
    <property type="organism ID" value="7518"/>
</dbReference>
<dbReference type="UniPathway" id="UPA00109"/>
<dbReference type="Proteomes" id="UP000000438">
    <property type="component" value="Chromosome"/>
</dbReference>
<dbReference type="GO" id="GO:0043796">
    <property type="term" value="F:glyceraldehyde dehydrogenase (NADP+) activity"/>
    <property type="evidence" value="ECO:0000314"/>
    <property type="project" value="UniProtKB"/>
</dbReference>
<dbReference type="GO" id="GO:0042803">
    <property type="term" value="F:protein homodimerization activity"/>
    <property type="evidence" value="ECO:0000314"/>
    <property type="project" value="UniProtKB"/>
</dbReference>
<dbReference type="GO" id="GO:0004777">
    <property type="term" value="F:succinate-semialdehyde dehydrogenase (NAD+) activity"/>
    <property type="evidence" value="ECO:0007669"/>
    <property type="project" value="TreeGrafter"/>
</dbReference>
<dbReference type="GO" id="GO:0009255">
    <property type="term" value="P:Entner-Doudoroff pathway through 6-phosphogluconate"/>
    <property type="evidence" value="ECO:0000314"/>
    <property type="project" value="UniProtKB"/>
</dbReference>
<dbReference type="GO" id="GO:0009450">
    <property type="term" value="P:gamma-aminobutyric acid catabolic process"/>
    <property type="evidence" value="ECO:0007669"/>
    <property type="project" value="TreeGrafter"/>
</dbReference>
<dbReference type="GO" id="GO:0006096">
    <property type="term" value="P:glycolytic process"/>
    <property type="evidence" value="ECO:0007669"/>
    <property type="project" value="UniProtKB-UniPathway"/>
</dbReference>
<dbReference type="GO" id="GO:0051289">
    <property type="term" value="P:protein homotetramerization"/>
    <property type="evidence" value="ECO:0000250"/>
    <property type="project" value="UniProtKB"/>
</dbReference>
<dbReference type="FunFam" id="3.40.309.10:FF:000009">
    <property type="entry name" value="Aldehyde dehydrogenase A"/>
    <property type="match status" value="1"/>
</dbReference>
<dbReference type="FunFam" id="3.40.605.10:FF:000022">
    <property type="entry name" value="Aldehyde dehydrogenase A"/>
    <property type="match status" value="1"/>
</dbReference>
<dbReference type="Gene3D" id="3.40.605.10">
    <property type="entry name" value="Aldehyde Dehydrogenase, Chain A, domain 1"/>
    <property type="match status" value="1"/>
</dbReference>
<dbReference type="Gene3D" id="3.40.309.10">
    <property type="entry name" value="Aldehyde Dehydrogenase, Chain A, domain 2"/>
    <property type="match status" value="1"/>
</dbReference>
<dbReference type="InterPro" id="IPR016161">
    <property type="entry name" value="Ald_DH/histidinol_DH"/>
</dbReference>
<dbReference type="InterPro" id="IPR016163">
    <property type="entry name" value="Ald_DH_C"/>
</dbReference>
<dbReference type="InterPro" id="IPR029510">
    <property type="entry name" value="Ald_DH_CS_GLU"/>
</dbReference>
<dbReference type="InterPro" id="IPR016162">
    <property type="entry name" value="Ald_DH_N"/>
</dbReference>
<dbReference type="InterPro" id="IPR015590">
    <property type="entry name" value="Aldehyde_DH_dom"/>
</dbReference>
<dbReference type="InterPro" id="IPR050740">
    <property type="entry name" value="Aldehyde_DH_Superfamily"/>
</dbReference>
<dbReference type="InterPro" id="IPR053507">
    <property type="entry name" value="NADP-Glyceraldehyde_DH"/>
</dbReference>
<dbReference type="NCBIfam" id="NF040792">
    <property type="entry name" value="glyc_ald_dh"/>
    <property type="match status" value="1"/>
</dbReference>
<dbReference type="PANTHER" id="PTHR43353">
    <property type="entry name" value="SUCCINATE-SEMIALDEHYDE DEHYDROGENASE, MITOCHONDRIAL"/>
    <property type="match status" value="1"/>
</dbReference>
<dbReference type="PANTHER" id="PTHR43353:SF5">
    <property type="entry name" value="SUCCINATE-SEMIALDEHYDE DEHYDROGENASE, MITOCHONDRIAL"/>
    <property type="match status" value="1"/>
</dbReference>
<dbReference type="Pfam" id="PF00171">
    <property type="entry name" value="Aldedh"/>
    <property type="match status" value="1"/>
</dbReference>
<dbReference type="SUPFAM" id="SSF53720">
    <property type="entry name" value="ALDH-like"/>
    <property type="match status" value="1"/>
</dbReference>
<dbReference type="PROSITE" id="PS00687">
    <property type="entry name" value="ALDEHYDE_DEHYDR_GLU"/>
    <property type="match status" value="1"/>
</dbReference>
<sequence>MKIYIDGEWRDSSSGETIKKYNPSTGEVLDTFPAATRNDVDAAIDSAEDAFKRWSDMTSMERSKILYKALELISKDKDQLTDLLIKENGKVKREAMDETEGVIDQLQYYTEFERKLTGDIVEGTSNKRKIFQYKVPYGIVIAITPWNFPAAMVIRKLAPALLTGNTVILKPSSDTPLTAEWLVKKFVDAGIPKGVLNLITGKGSEIGDYIVEHKKVSLITMTGSTSTGQRIMEKASKNMAKLILELGGKAPFMVWKDANIERALKSLVWAKYLNVGQSCIAAERLYIHEDIYDEFMKKFIEVSKRIKLGDPESSDMGPLINKSAVETTEKYVDIARSSGYKILLGGKKPELSGKYKNGYFYEPTIIENVPQDSPLFQEEIFGPVIGAESVSSVDELYEKANDSKYGLASYLFTEDPELIFEASEKIRFGELYVNMPGPEASQGYHTGFRLTGQAGEGSKYGISEYLKLKNVYVDYSRGNLSISTVNDDLFKNL</sequence>
<evidence type="ECO:0000250" key="1"/>
<evidence type="ECO:0000250" key="2">
    <source>
        <dbReference type="UniProtKB" id="O57693"/>
    </source>
</evidence>
<evidence type="ECO:0000250" key="3">
    <source>
        <dbReference type="UniProtKB" id="P28037"/>
    </source>
</evidence>
<evidence type="ECO:0000250" key="4">
    <source>
        <dbReference type="UniProtKB" id="Q59931"/>
    </source>
</evidence>
<evidence type="ECO:0000250" key="5">
    <source>
        <dbReference type="UniProtKB" id="Q84DC3"/>
    </source>
</evidence>
<evidence type="ECO:0000250" key="6">
    <source>
        <dbReference type="UniProtKB" id="Q9HK01"/>
    </source>
</evidence>
<evidence type="ECO:0000255" key="7">
    <source>
        <dbReference type="PROSITE-ProRule" id="PRU10007"/>
    </source>
</evidence>
<evidence type="ECO:0000255" key="8">
    <source>
        <dbReference type="RuleBase" id="RU003345"/>
    </source>
</evidence>
<evidence type="ECO:0000269" key="9">
    <source>
    </source>
</evidence>
<evidence type="ECO:0000303" key="10">
    <source>
    </source>
</evidence>
<evidence type="ECO:0000305" key="11"/>
<evidence type="ECO:0000312" key="12">
    <source>
        <dbReference type="EMBL" id="AAT42917.1"/>
    </source>
</evidence>
<comment type="function">
    <text evidence="9">NADP-dependent dehydrogenase of the nED (non-phosphorylated Entner-Doudoroff) pathway with highest activity towards glyceraldehydes (e.g. D,L-glyceraldehyde and D-glyceraldehyde), to a lesser extent towards D,L-glyceraldehyde-3-phosphate and glycolaldehyde, but no activity towards aliphatic or aromatic aldehydes.</text>
</comment>
<comment type="catalytic activity">
    <reaction evidence="9">
        <text>D-glyceraldehyde + NADP(+) + H2O = (R)-glycerate + NADPH + 2 H(+)</text>
        <dbReference type="Rhea" id="RHEA:40163"/>
        <dbReference type="ChEBI" id="CHEBI:15377"/>
        <dbReference type="ChEBI" id="CHEBI:15378"/>
        <dbReference type="ChEBI" id="CHEBI:16659"/>
        <dbReference type="ChEBI" id="CHEBI:17378"/>
        <dbReference type="ChEBI" id="CHEBI:57783"/>
        <dbReference type="ChEBI" id="CHEBI:58349"/>
        <dbReference type="EC" id="1.2.1.89"/>
    </reaction>
</comment>
<comment type="activity regulation">
    <text evidence="9">Stable for 2 hours at 60 degrees Celsius but activity is decreased to less than 50 percent within 15 minutes at 70 degrees Celsius.</text>
</comment>
<comment type="biophysicochemical properties">
    <kinetics>
        <KM evidence="9">0.06 mM for glyceraldehyde (at pH 6.9 and 58 degrees Celsius)</KM>
        <KM evidence="9">5.1 mM for glyceraldehyde-3-phosphate (at pH 6.9 and 58 degrees Celsius)</KM>
        <KM evidence="9">11.1 mM for glycolaldehyde (at pH 6.9 and 58 degrees Celsius)</KM>
        <KM evidence="9">0.42 mM for NADP (at pH 6.9 and 58 degrees Celsius)</KM>
        <text evidence="9">kcat is 10 sec(-1) with glyceraldehyde as substrate, 12 sec(-1) with glyceraldehyde-3-phosphate as substrate, 20 sec(-1) with glycolaldehyde as substrate and 10 sec(-1) with NADP as substrate (at pH 6.9 and 58 degrees Celsius).</text>
    </kinetics>
    <phDependence>
        <text evidence="9">Optimum pH is 6.6.</text>
    </phDependence>
    <temperatureDependence>
        <text evidence="9">Optimum temperature is 63 degrees Celsius.</text>
    </temperatureDependence>
</comment>
<comment type="pathway">
    <text evidence="10">Carbohydrate degradation; glycolysis.</text>
</comment>
<comment type="subunit">
    <text evidence="6 9">Homotetramer (By similarity). Dimer of dimers.</text>
</comment>
<comment type="similarity">
    <text evidence="8 11">Belongs to the aldehyde dehydrogenase family. Glyceraldehyde dehydrogenase subfamily.</text>
</comment>
<protein>
    <recommendedName>
        <fullName evidence="10">D-glyceraldehyde dehydrogenase (NADP(+))</fullName>
        <shortName evidence="10">GADH</shortName>
        <shortName evidence="10">Glyceraldehyde DH</shortName>
        <ecNumber evidence="9">1.2.1.89</ecNumber>
    </recommendedName>
</protein>
<accession>Q6L285</accession>
<proteinExistence type="evidence at protein level"/>